<evidence type="ECO:0000250" key="1">
    <source>
        <dbReference type="UniProtKB" id="Q18825"/>
    </source>
</evidence>
<evidence type="ECO:0000255" key="2"/>
<evidence type="ECO:0000256" key="3">
    <source>
        <dbReference type="SAM" id="MobiDB-lite"/>
    </source>
</evidence>
<reference key="1">
    <citation type="journal article" date="2003" name="PLoS Biol.">
        <title>The genome sequence of Caenorhabditis briggsae: a platform for comparative genomics.</title>
        <authorList>
            <person name="Stein L.D."/>
            <person name="Bao Z."/>
            <person name="Blasiar D."/>
            <person name="Blumenthal T."/>
            <person name="Brent M.R."/>
            <person name="Chen N."/>
            <person name="Chinwalla A."/>
            <person name="Clarke L."/>
            <person name="Clee C."/>
            <person name="Coghlan A."/>
            <person name="Coulson A."/>
            <person name="D'Eustachio P."/>
            <person name="Fitch D.H.A."/>
            <person name="Fulton L.A."/>
            <person name="Fulton R.E."/>
            <person name="Griffiths-Jones S."/>
            <person name="Harris T.W."/>
            <person name="Hillier L.W."/>
            <person name="Kamath R."/>
            <person name="Kuwabara P.E."/>
            <person name="Mardis E.R."/>
            <person name="Marra M.A."/>
            <person name="Miner T.L."/>
            <person name="Minx P."/>
            <person name="Mullikin J.C."/>
            <person name="Plumb R.W."/>
            <person name="Rogers J."/>
            <person name="Schein J.E."/>
            <person name="Sohrmann M."/>
            <person name="Spieth J."/>
            <person name="Stajich J.E."/>
            <person name="Wei C."/>
            <person name="Willey D."/>
            <person name="Wilson R.K."/>
            <person name="Durbin R.M."/>
            <person name="Waterston R.H."/>
        </authorList>
    </citation>
    <scope>NUCLEOTIDE SEQUENCE [LARGE SCALE GENOMIC DNA]</scope>
    <source>
        <strain>AF16</strain>
    </source>
</reference>
<proteinExistence type="inferred from homology"/>
<protein>
    <recommendedName>
        <fullName>Beta-catenin/armadillo-related protein 1</fullName>
    </recommendedName>
    <alternativeName>
        <fullName>Protruding vulva protein 1</fullName>
    </alternativeName>
    <alternativeName>
        <fullName>Suppressor of polyray 1</fullName>
    </alternativeName>
</protein>
<name>BAR1_CAEBR</name>
<comment type="function">
    <text evidence="1">Participates in the Wnt signaling pathway which affects cell fate and may regulate the stem cell divisions of seam cells during larval development. Functions as a transcriptional activator but is dependent on the interaction with pop-1. Involved in maintaining lin-39 Hox expression and regulating glr-1 abundance at the synapses. Required for mab-5 expression during Q neuroblast migration and for oxidative stress-induced daf-16 signaling. Has roles in egg laying, vulva precursor cell fate determination, Q neuroblast migration, posterior ectodermal cell P12 specification, movement, body length, male tail development and dauer induction. Functionally redundant to wrm-1 and hmp-2 (By similarity).</text>
</comment>
<comment type="subunit">
    <text evidence="1">Interacts with apr-1, axl-1, daf-16, lin-23, and pop-1 (via acidic region in N-terminus 1-44). Interacts (via ARM repeats) with pry-1 (By similarity).</text>
</comment>
<comment type="subcellular location">
    <subcellularLocation>
        <location evidence="1">Cytoplasm</location>
    </subcellularLocation>
    <subcellularLocation>
        <location evidence="1">Nucleus</location>
    </subcellularLocation>
    <subcellularLocation>
        <location evidence="1">Membrane</location>
    </subcellularLocation>
    <subcellularLocation>
        <location evidence="1">Cell junction</location>
    </subcellularLocation>
    <text evidence="1">Mostly cytoplasmic.</text>
</comment>
<comment type="similarity">
    <text evidence="2">Belongs to the beta-catenin family.</text>
</comment>
<feature type="chain" id="PRO_0000372804" description="Beta-catenin/armadillo-related protein 1">
    <location>
        <begin position="1"/>
        <end position="808"/>
    </location>
</feature>
<feature type="repeat" description="ARM 1" evidence="2">
    <location>
        <begin position="118"/>
        <end position="160"/>
    </location>
</feature>
<feature type="repeat" description="ARM 2" evidence="2">
    <location>
        <begin position="165"/>
        <end position="209"/>
    </location>
</feature>
<feature type="repeat" description="ARM 3" evidence="2">
    <location>
        <begin position="369"/>
        <end position="408"/>
    </location>
</feature>
<feature type="region of interest" description="Involved in transcriptional activation" evidence="1">
    <location>
        <begin position="1"/>
        <end position="85"/>
    </location>
</feature>
<feature type="region of interest" description="Involved in transcriptional activation" evidence="1">
    <location>
        <begin position="541"/>
        <end position="808"/>
    </location>
</feature>
<feature type="region of interest" description="Disordered" evidence="3">
    <location>
        <begin position="702"/>
        <end position="808"/>
    </location>
</feature>
<feature type="compositionally biased region" description="Polar residues" evidence="3">
    <location>
        <begin position="723"/>
        <end position="736"/>
    </location>
</feature>
<feature type="compositionally biased region" description="Low complexity" evidence="3">
    <location>
        <begin position="737"/>
        <end position="750"/>
    </location>
</feature>
<feature type="compositionally biased region" description="Polar residues" evidence="3">
    <location>
        <begin position="786"/>
        <end position="798"/>
    </location>
</feature>
<sequence>MDLDPNLVINHDDTNLSEISYTMEQDSSSYSLEMGGTPSSAGHRKVDMWQNHNFDSGFQTMNHSEAPSIISSLHPSSHLSGMSSMAEYEPIPNLSEQQKQKFDGITKNPTDGQYNTVRAIPELTMLMKDQDNEVVQKAVMIMQNIAKMECDAMRRQNETKIVDPCVIFTLRNLLRDKVDHPNIIRFTLGTLFNICNRQEGIDLVTRAISEQPDIIPNLIRHIGTFANSIYKYAILTMHSILSDKQRGGQSVTIARQQDAIIHVTPWLEAEKSEKLLPVIVDLIRVLCEKNTDQKVKFVKMGGPQKLLHILQQRGYENLLWRSTQLLKTFSNFDAPCLVAFGGRQILAGMLSHGSPRLVLSTLETLRNISDVPSKMKEELLLKSLLELVNSRNAVIRLYSAQTMSNLVANNRPNKEYMCSNNGVVNLCRALAIATKDWQNFQDKEAQQMEDYAESLICTLRHLCVGHPLAEKVQAYVFREPSIFLHKLMTMRPVLLKHTLNLLLKVVSQNALLAPFLLCRIGEIGFVEQLIHILRVACTQLNVQDVIEGVRVKDIVHLCIQILRLITRNPDILNEVDFFLRSPENSRMGDGHTLPIFVLQKANVEENTKSSTLELIYNLMHHEKMADHLERDEILCKMLHSVQMQAANHPELANLAANILKLMSEKRERNRIHYGRHGSFESQFGHLSVAAQRTEVLNSHGETYEGAGEQWSQPMSDDSMMESYCNSSGRDSSKTYNSPMYHSPPSMYPEYPNGPPSGPYYDPHAFTSTRPTPPHYANYDSPPVYNNIPSNQGPSSHLSDQYPYRQGRF</sequence>
<gene>
    <name type="primary">bar-1</name>
    <name type="synonym">pvl-1</name>
    <name type="synonym">spy-1</name>
    <name type="ORF">CBG10985</name>
</gene>
<keyword id="KW-0010">Activator</keyword>
<keyword id="KW-0965">Cell junction</keyword>
<keyword id="KW-0963">Cytoplasm</keyword>
<keyword id="KW-0217">Developmental protein</keyword>
<keyword id="KW-0472">Membrane</keyword>
<keyword id="KW-0539">Nucleus</keyword>
<keyword id="KW-1185">Reference proteome</keyword>
<keyword id="KW-0677">Repeat</keyword>
<keyword id="KW-0804">Transcription</keyword>
<keyword id="KW-0805">Transcription regulation</keyword>
<keyword id="KW-0879">Wnt signaling pathway</keyword>
<organism>
    <name type="scientific">Caenorhabditis briggsae</name>
    <dbReference type="NCBI Taxonomy" id="6238"/>
    <lineage>
        <taxon>Eukaryota</taxon>
        <taxon>Metazoa</taxon>
        <taxon>Ecdysozoa</taxon>
        <taxon>Nematoda</taxon>
        <taxon>Chromadorea</taxon>
        <taxon>Rhabditida</taxon>
        <taxon>Rhabditina</taxon>
        <taxon>Rhabditomorpha</taxon>
        <taxon>Rhabditoidea</taxon>
        <taxon>Rhabditidae</taxon>
        <taxon>Peloderinae</taxon>
        <taxon>Caenorhabditis</taxon>
    </lineage>
</organism>
<accession>A8XBZ8</accession>
<dbReference type="EMBL" id="HE601482">
    <property type="protein sequence ID" value="CAP30237.3"/>
    <property type="molecule type" value="Genomic_DNA"/>
</dbReference>
<dbReference type="SMR" id="A8XBZ8"/>
<dbReference type="FunCoup" id="A8XBZ8">
    <property type="interactions" value="138"/>
</dbReference>
<dbReference type="STRING" id="6238.A8XBZ8"/>
<dbReference type="EnsemblMetazoa" id="CBG10985a.1">
    <property type="protein sequence ID" value="CBG10985a.1"/>
    <property type="gene ID" value="WBGene00032205"/>
</dbReference>
<dbReference type="KEGG" id="cbr:CBG_10985"/>
<dbReference type="CTD" id="8586998"/>
<dbReference type="WormBase" id="CBG10985a">
    <property type="protein sequence ID" value="CBP02677"/>
    <property type="gene ID" value="WBGene00032205"/>
    <property type="gene designation" value="Cbr-bar-1"/>
</dbReference>
<dbReference type="eggNOG" id="KOG4203">
    <property type="taxonomic scope" value="Eukaryota"/>
</dbReference>
<dbReference type="HOGENOM" id="CLU_347902_0_0_1"/>
<dbReference type="InParanoid" id="A8XBZ8"/>
<dbReference type="OMA" id="MWSNNFD"/>
<dbReference type="Proteomes" id="UP000008549">
    <property type="component" value="Unassembled WGS sequence"/>
</dbReference>
<dbReference type="GO" id="GO:0005912">
    <property type="term" value="C:adherens junction"/>
    <property type="evidence" value="ECO:0000318"/>
    <property type="project" value="GO_Central"/>
</dbReference>
<dbReference type="GO" id="GO:0016342">
    <property type="term" value="C:catenin complex"/>
    <property type="evidence" value="ECO:0000318"/>
    <property type="project" value="GO_Central"/>
</dbReference>
<dbReference type="GO" id="GO:0030054">
    <property type="term" value="C:cell junction"/>
    <property type="evidence" value="ECO:0000250"/>
    <property type="project" value="UniProtKB"/>
</dbReference>
<dbReference type="GO" id="GO:0005737">
    <property type="term" value="C:cytoplasm"/>
    <property type="evidence" value="ECO:0000250"/>
    <property type="project" value="UniProtKB"/>
</dbReference>
<dbReference type="GO" id="GO:0005634">
    <property type="term" value="C:nucleus"/>
    <property type="evidence" value="ECO:0000250"/>
    <property type="project" value="UniProtKB"/>
</dbReference>
<dbReference type="GO" id="GO:0045294">
    <property type="term" value="F:alpha-catenin binding"/>
    <property type="evidence" value="ECO:0000318"/>
    <property type="project" value="GO_Central"/>
</dbReference>
<dbReference type="GO" id="GO:0045296">
    <property type="term" value="F:cadherin binding"/>
    <property type="evidence" value="ECO:0000318"/>
    <property type="project" value="GO_Central"/>
</dbReference>
<dbReference type="GO" id="GO:0016922">
    <property type="term" value="F:nuclear receptor binding"/>
    <property type="evidence" value="ECO:0000318"/>
    <property type="project" value="GO_Central"/>
</dbReference>
<dbReference type="GO" id="GO:0019903">
    <property type="term" value="F:protein phosphatase binding"/>
    <property type="evidence" value="ECO:0000318"/>
    <property type="project" value="GO_Central"/>
</dbReference>
<dbReference type="GO" id="GO:0003713">
    <property type="term" value="F:transcription coactivator activity"/>
    <property type="evidence" value="ECO:0000318"/>
    <property type="project" value="GO_Central"/>
</dbReference>
<dbReference type="GO" id="GO:0060070">
    <property type="term" value="P:canonical Wnt signaling pathway"/>
    <property type="evidence" value="ECO:0000318"/>
    <property type="project" value="GO_Central"/>
</dbReference>
<dbReference type="GO" id="GO:0001708">
    <property type="term" value="P:cell fate specification"/>
    <property type="evidence" value="ECO:0000250"/>
    <property type="project" value="UniProtKB"/>
</dbReference>
<dbReference type="GO" id="GO:0098609">
    <property type="term" value="P:cell-cell adhesion"/>
    <property type="evidence" value="ECO:0000318"/>
    <property type="project" value="GO_Central"/>
</dbReference>
<dbReference type="GO" id="GO:0045944">
    <property type="term" value="P:positive regulation of transcription by RNA polymerase II"/>
    <property type="evidence" value="ECO:0000318"/>
    <property type="project" value="GO_Central"/>
</dbReference>
<dbReference type="FunFam" id="1.25.10.10:FF:000915">
    <property type="entry name" value="Beta-catenin/armadillo-related protein 1"/>
    <property type="match status" value="1"/>
</dbReference>
<dbReference type="Gene3D" id="1.25.10.10">
    <property type="entry name" value="Leucine-rich Repeat Variant"/>
    <property type="match status" value="1"/>
</dbReference>
<dbReference type="InterPro" id="IPR011989">
    <property type="entry name" value="ARM-like"/>
</dbReference>
<dbReference type="InterPro" id="IPR016024">
    <property type="entry name" value="ARM-type_fold"/>
</dbReference>
<dbReference type="InterPro" id="IPR000225">
    <property type="entry name" value="Armadillo"/>
</dbReference>
<dbReference type="InterPro" id="IPR013284">
    <property type="entry name" value="Beta-catenin"/>
</dbReference>
<dbReference type="PANTHER" id="PTHR45976">
    <property type="entry name" value="ARMADILLO SEGMENT POLARITY PROTEIN"/>
    <property type="match status" value="1"/>
</dbReference>
<dbReference type="SMART" id="SM00185">
    <property type="entry name" value="ARM"/>
    <property type="match status" value="3"/>
</dbReference>
<dbReference type="SUPFAM" id="SSF48371">
    <property type="entry name" value="ARM repeat"/>
    <property type="match status" value="1"/>
</dbReference>
<dbReference type="PROSITE" id="PS50176">
    <property type="entry name" value="ARM_REPEAT"/>
    <property type="match status" value="1"/>
</dbReference>